<dbReference type="EC" id="2.4.1.21" evidence="1"/>
<dbReference type="EMBL" id="CP000264">
    <property type="protein sequence ID" value="ABD56032.1"/>
    <property type="molecule type" value="Genomic_DNA"/>
</dbReference>
<dbReference type="RefSeq" id="WP_011456236.1">
    <property type="nucleotide sequence ID" value="NC_007802.1"/>
</dbReference>
<dbReference type="SMR" id="Q28MN0"/>
<dbReference type="STRING" id="290400.Jann_3115"/>
<dbReference type="CAZy" id="GT5">
    <property type="family name" value="Glycosyltransferase Family 5"/>
</dbReference>
<dbReference type="KEGG" id="jan:Jann_3115"/>
<dbReference type="eggNOG" id="COG0297">
    <property type="taxonomic scope" value="Bacteria"/>
</dbReference>
<dbReference type="HOGENOM" id="CLU_009583_18_4_5"/>
<dbReference type="OrthoDB" id="9808590at2"/>
<dbReference type="UniPathway" id="UPA00164"/>
<dbReference type="Proteomes" id="UP000008326">
    <property type="component" value="Chromosome"/>
</dbReference>
<dbReference type="GO" id="GO:0009011">
    <property type="term" value="F:alpha-1,4-glucan glucosyltransferase (ADP-glucose donor) activity"/>
    <property type="evidence" value="ECO:0007669"/>
    <property type="project" value="UniProtKB-UniRule"/>
</dbReference>
<dbReference type="GO" id="GO:0004373">
    <property type="term" value="F:alpha-1,4-glucan glucosyltransferase (UDP-glucose donor) activity"/>
    <property type="evidence" value="ECO:0007669"/>
    <property type="project" value="InterPro"/>
</dbReference>
<dbReference type="GO" id="GO:0005978">
    <property type="term" value="P:glycogen biosynthetic process"/>
    <property type="evidence" value="ECO:0007669"/>
    <property type="project" value="UniProtKB-UniRule"/>
</dbReference>
<dbReference type="CDD" id="cd03791">
    <property type="entry name" value="GT5_Glycogen_synthase_DULL1-like"/>
    <property type="match status" value="1"/>
</dbReference>
<dbReference type="Gene3D" id="3.40.50.2000">
    <property type="entry name" value="Glycogen Phosphorylase B"/>
    <property type="match status" value="2"/>
</dbReference>
<dbReference type="HAMAP" id="MF_00484">
    <property type="entry name" value="Glycogen_synth"/>
    <property type="match status" value="1"/>
</dbReference>
<dbReference type="InterPro" id="IPR001296">
    <property type="entry name" value="Glyco_trans_1"/>
</dbReference>
<dbReference type="InterPro" id="IPR011835">
    <property type="entry name" value="GS/SS"/>
</dbReference>
<dbReference type="InterPro" id="IPR013534">
    <property type="entry name" value="Starch_synth_cat_dom"/>
</dbReference>
<dbReference type="NCBIfam" id="TIGR02095">
    <property type="entry name" value="glgA"/>
    <property type="match status" value="1"/>
</dbReference>
<dbReference type="NCBIfam" id="NF001899">
    <property type="entry name" value="PRK00654.1-2"/>
    <property type="match status" value="1"/>
</dbReference>
<dbReference type="PANTHER" id="PTHR45825:SF11">
    <property type="entry name" value="ALPHA AMYLASE DOMAIN-CONTAINING PROTEIN"/>
    <property type="match status" value="1"/>
</dbReference>
<dbReference type="PANTHER" id="PTHR45825">
    <property type="entry name" value="GRANULE-BOUND STARCH SYNTHASE 1, CHLOROPLASTIC/AMYLOPLASTIC"/>
    <property type="match status" value="1"/>
</dbReference>
<dbReference type="Pfam" id="PF08323">
    <property type="entry name" value="Glyco_transf_5"/>
    <property type="match status" value="1"/>
</dbReference>
<dbReference type="Pfam" id="PF00534">
    <property type="entry name" value="Glycos_transf_1"/>
    <property type="match status" value="1"/>
</dbReference>
<dbReference type="SUPFAM" id="SSF53756">
    <property type="entry name" value="UDP-Glycosyltransferase/glycogen phosphorylase"/>
    <property type="match status" value="1"/>
</dbReference>
<comment type="function">
    <text evidence="1">Synthesizes alpha-1,4-glucan chains using ADP-glucose.</text>
</comment>
<comment type="catalytic activity">
    <reaction evidence="1">
        <text>[(1-&gt;4)-alpha-D-glucosyl](n) + ADP-alpha-D-glucose = [(1-&gt;4)-alpha-D-glucosyl](n+1) + ADP + H(+)</text>
        <dbReference type="Rhea" id="RHEA:18189"/>
        <dbReference type="Rhea" id="RHEA-COMP:9584"/>
        <dbReference type="Rhea" id="RHEA-COMP:9587"/>
        <dbReference type="ChEBI" id="CHEBI:15378"/>
        <dbReference type="ChEBI" id="CHEBI:15444"/>
        <dbReference type="ChEBI" id="CHEBI:57498"/>
        <dbReference type="ChEBI" id="CHEBI:456216"/>
        <dbReference type="EC" id="2.4.1.21"/>
    </reaction>
</comment>
<comment type="pathway">
    <text evidence="1">Glycan biosynthesis; glycogen biosynthesis.</text>
</comment>
<comment type="similarity">
    <text evidence="1">Belongs to the glycosyltransferase 1 family. Bacterial/plant glycogen synthase subfamily.</text>
</comment>
<keyword id="KW-0320">Glycogen biosynthesis</keyword>
<keyword id="KW-0328">Glycosyltransferase</keyword>
<keyword id="KW-1185">Reference proteome</keyword>
<keyword id="KW-0808">Transferase</keyword>
<evidence type="ECO:0000255" key="1">
    <source>
        <dbReference type="HAMAP-Rule" id="MF_00484"/>
    </source>
</evidence>
<sequence>MTRVLSVASECAPLVKTGGLADVVGALPGAMAALGDELRTLVPGYATMPVVGGAVVAAFDDLFGGPATVDALTHEGLDLLILRAPHLFDRPGGLYIDAFGADWPDNAERFAALSYAAAHVAAKGAGDWRADVVHGHDWQAGLVPEYLAGLGCDTPFILTIHNVAFHGNTGAEKLDALRLDPDRFNADQYEFWGQISALKAGLMGAAQITTVSQTYAEELMTPQFGMGMDGVLRHRRDALTGIVNGIDLDVWNPETDPQITPYTTFKGKAANKAALQAEFGLSKAPGPLCVLVSRLTDQKGIDLLLDAMHVVLERGGQVAVLGSGAPDLEVCLLERADAEPNLAVKIGYDEALSHRMMAGGDCILVPSRFEPCGLTQLYGLRYGTLPLVALTGGLADTVINASPAALARRVATGIQFSPITAEALANAFSRLCDLYADRKTWTAMVRNAMKQPVGWDMSASRYHALYKATARK</sequence>
<feature type="chain" id="PRO_0000241793" description="Glycogen synthase">
    <location>
        <begin position="1"/>
        <end position="472"/>
    </location>
</feature>
<feature type="binding site" evidence="1">
    <location>
        <position position="16"/>
    </location>
    <ligand>
        <name>ADP-alpha-D-glucose</name>
        <dbReference type="ChEBI" id="CHEBI:57498"/>
    </ligand>
</feature>
<gene>
    <name evidence="1" type="primary">glgA</name>
    <name type="ordered locus">Jann_3115</name>
</gene>
<organism>
    <name type="scientific">Jannaschia sp. (strain CCS1)</name>
    <dbReference type="NCBI Taxonomy" id="290400"/>
    <lineage>
        <taxon>Bacteria</taxon>
        <taxon>Pseudomonadati</taxon>
        <taxon>Pseudomonadota</taxon>
        <taxon>Alphaproteobacteria</taxon>
        <taxon>Rhodobacterales</taxon>
        <taxon>Roseobacteraceae</taxon>
        <taxon>Jannaschia</taxon>
    </lineage>
</organism>
<name>GLGA_JANSC</name>
<reference key="1">
    <citation type="submission" date="2006-02" db="EMBL/GenBank/DDBJ databases">
        <title>Complete sequence of chromosome of Jannaschia sp. CCS1.</title>
        <authorList>
            <consortium name="US DOE Joint Genome Institute"/>
            <person name="Copeland A."/>
            <person name="Lucas S."/>
            <person name="Lapidus A."/>
            <person name="Barry K."/>
            <person name="Detter J.C."/>
            <person name="Glavina del Rio T."/>
            <person name="Hammon N."/>
            <person name="Israni S."/>
            <person name="Pitluck S."/>
            <person name="Brettin T."/>
            <person name="Bruce D."/>
            <person name="Han C."/>
            <person name="Tapia R."/>
            <person name="Gilna P."/>
            <person name="Chertkov O."/>
            <person name="Saunders E."/>
            <person name="Schmutz J."/>
            <person name="Larimer F."/>
            <person name="Land M."/>
            <person name="Kyrpides N."/>
            <person name="Lykidis A."/>
            <person name="Moran M.A."/>
            <person name="Belas R."/>
            <person name="Ye W."/>
            <person name="Buchan A."/>
            <person name="Gonzalez J.M."/>
            <person name="Schell M.A."/>
            <person name="Richardson P."/>
        </authorList>
    </citation>
    <scope>NUCLEOTIDE SEQUENCE [LARGE SCALE GENOMIC DNA]</scope>
    <source>
        <strain>CCS1</strain>
    </source>
</reference>
<protein>
    <recommendedName>
        <fullName evidence="1">Glycogen synthase</fullName>
        <ecNumber evidence="1">2.4.1.21</ecNumber>
    </recommendedName>
    <alternativeName>
        <fullName evidence="1">Starch [bacterial glycogen] synthase</fullName>
    </alternativeName>
</protein>
<proteinExistence type="inferred from homology"/>
<accession>Q28MN0</accession>